<proteinExistence type="inferred from homology"/>
<evidence type="ECO:0000255" key="1">
    <source>
        <dbReference type="HAMAP-Rule" id="MF_01416"/>
    </source>
</evidence>
<sequence>MATNLKDIADQYAKAIFELSSEQGNVEDTRKDLDTLKVVFENNPNFVTIVSSNDINSEARDGLLTTLTTGASEAIQNLVKLLAYNNRLNLLTQIVTSFEDYYNDAHGIVNVVATTAVALDETRLDKLAAVFASKTGAKHVNLTNNVDESIIGGVILQSQSTLIDGSLQTKIAKMKAQLLG</sequence>
<organism>
    <name type="scientific">Leuconostoc citreum (strain KM20)</name>
    <dbReference type="NCBI Taxonomy" id="349519"/>
    <lineage>
        <taxon>Bacteria</taxon>
        <taxon>Bacillati</taxon>
        <taxon>Bacillota</taxon>
        <taxon>Bacilli</taxon>
        <taxon>Lactobacillales</taxon>
        <taxon>Lactobacillaceae</taxon>
        <taxon>Leuconostoc</taxon>
    </lineage>
</organism>
<accession>B1MW88</accession>
<reference key="1">
    <citation type="journal article" date="2008" name="J. Bacteriol.">
        <title>Complete genome sequence of Leuconostoc citreum KM20.</title>
        <authorList>
            <person name="Kim J.F."/>
            <person name="Jeong H."/>
            <person name="Lee J.-S."/>
            <person name="Choi S.-H."/>
            <person name="Ha M."/>
            <person name="Hur C.-G."/>
            <person name="Kim J.-S."/>
            <person name="Lee S."/>
            <person name="Park H.-S."/>
            <person name="Park Y.-H."/>
            <person name="Oh T.K."/>
        </authorList>
    </citation>
    <scope>NUCLEOTIDE SEQUENCE [LARGE SCALE GENOMIC DNA]</scope>
    <source>
        <strain>KM20</strain>
    </source>
</reference>
<dbReference type="EMBL" id="DQ489736">
    <property type="protein sequence ID" value="ACA83453.1"/>
    <property type="molecule type" value="Genomic_DNA"/>
</dbReference>
<dbReference type="RefSeq" id="WP_004905001.1">
    <property type="nucleotide sequence ID" value="NC_010471.1"/>
</dbReference>
<dbReference type="SMR" id="B1MW88"/>
<dbReference type="STRING" id="349519.LCK_01630"/>
<dbReference type="GeneID" id="61103186"/>
<dbReference type="KEGG" id="lci:LCK_01630"/>
<dbReference type="eggNOG" id="COG0712">
    <property type="taxonomic scope" value="Bacteria"/>
</dbReference>
<dbReference type="HOGENOM" id="CLU_085114_4_1_9"/>
<dbReference type="OrthoDB" id="9786633at2"/>
<dbReference type="Proteomes" id="UP000002166">
    <property type="component" value="Chromosome"/>
</dbReference>
<dbReference type="GO" id="GO:0005886">
    <property type="term" value="C:plasma membrane"/>
    <property type="evidence" value="ECO:0007669"/>
    <property type="project" value="UniProtKB-SubCell"/>
</dbReference>
<dbReference type="GO" id="GO:0045259">
    <property type="term" value="C:proton-transporting ATP synthase complex"/>
    <property type="evidence" value="ECO:0007669"/>
    <property type="project" value="UniProtKB-KW"/>
</dbReference>
<dbReference type="GO" id="GO:0046933">
    <property type="term" value="F:proton-transporting ATP synthase activity, rotational mechanism"/>
    <property type="evidence" value="ECO:0007669"/>
    <property type="project" value="UniProtKB-UniRule"/>
</dbReference>
<dbReference type="Gene3D" id="1.10.520.20">
    <property type="entry name" value="N-terminal domain of the delta subunit of the F1F0-ATP synthase"/>
    <property type="match status" value="1"/>
</dbReference>
<dbReference type="HAMAP" id="MF_01416">
    <property type="entry name" value="ATP_synth_delta_bact"/>
    <property type="match status" value="1"/>
</dbReference>
<dbReference type="InterPro" id="IPR026015">
    <property type="entry name" value="ATP_synth_OSCP/delta_N_sf"/>
</dbReference>
<dbReference type="InterPro" id="IPR000711">
    <property type="entry name" value="ATPase_OSCP/dsu"/>
</dbReference>
<dbReference type="NCBIfam" id="TIGR01145">
    <property type="entry name" value="ATP_synt_delta"/>
    <property type="match status" value="1"/>
</dbReference>
<dbReference type="NCBIfam" id="NF004402">
    <property type="entry name" value="PRK05758.2-2"/>
    <property type="match status" value="1"/>
</dbReference>
<dbReference type="PANTHER" id="PTHR11910">
    <property type="entry name" value="ATP SYNTHASE DELTA CHAIN"/>
    <property type="match status" value="1"/>
</dbReference>
<dbReference type="Pfam" id="PF00213">
    <property type="entry name" value="OSCP"/>
    <property type="match status" value="1"/>
</dbReference>
<dbReference type="PRINTS" id="PR00125">
    <property type="entry name" value="ATPASEDELTA"/>
</dbReference>
<dbReference type="SUPFAM" id="SSF47928">
    <property type="entry name" value="N-terminal domain of the delta subunit of the F1F0-ATP synthase"/>
    <property type="match status" value="1"/>
</dbReference>
<name>ATPD_LEUCK</name>
<gene>
    <name evidence="1" type="primary">atpH</name>
    <name type="ordered locus">LCK_01630</name>
</gene>
<comment type="function">
    <text evidence="1">F(1)F(0) ATP synthase produces ATP from ADP in the presence of a proton or sodium gradient. F-type ATPases consist of two structural domains, F(1) containing the extramembraneous catalytic core and F(0) containing the membrane proton channel, linked together by a central stalk and a peripheral stalk. During catalysis, ATP synthesis in the catalytic domain of F(1) is coupled via a rotary mechanism of the central stalk subunits to proton translocation.</text>
</comment>
<comment type="function">
    <text evidence="1">This protein is part of the stalk that links CF(0) to CF(1). It either transmits conformational changes from CF(0) to CF(1) or is implicated in proton conduction.</text>
</comment>
<comment type="subunit">
    <text evidence="1">F-type ATPases have 2 components, F(1) - the catalytic core - and F(0) - the membrane proton channel. F(1) has five subunits: alpha(3), beta(3), gamma(1), delta(1), epsilon(1). F(0) has three main subunits: a(1), b(2) and c(10-14). The alpha and beta chains form an alternating ring which encloses part of the gamma chain. F(1) is attached to F(0) by a central stalk formed by the gamma and epsilon chains, while a peripheral stalk is formed by the delta and b chains.</text>
</comment>
<comment type="subcellular location">
    <subcellularLocation>
        <location evidence="1">Cell membrane</location>
        <topology evidence="1">Peripheral membrane protein</topology>
    </subcellularLocation>
</comment>
<comment type="similarity">
    <text evidence="1">Belongs to the ATPase delta chain family.</text>
</comment>
<keyword id="KW-0066">ATP synthesis</keyword>
<keyword id="KW-1003">Cell membrane</keyword>
<keyword id="KW-0139">CF(1)</keyword>
<keyword id="KW-0375">Hydrogen ion transport</keyword>
<keyword id="KW-0406">Ion transport</keyword>
<keyword id="KW-0472">Membrane</keyword>
<keyword id="KW-1185">Reference proteome</keyword>
<keyword id="KW-0813">Transport</keyword>
<feature type="chain" id="PRO_1000184745" description="ATP synthase subunit delta">
    <location>
        <begin position="1"/>
        <end position="180"/>
    </location>
</feature>
<protein>
    <recommendedName>
        <fullName evidence="1">ATP synthase subunit delta</fullName>
    </recommendedName>
    <alternativeName>
        <fullName evidence="1">ATP synthase F(1) sector subunit delta</fullName>
    </alternativeName>
    <alternativeName>
        <fullName evidence="1">F-type ATPase subunit delta</fullName>
        <shortName evidence="1">F-ATPase subunit delta</shortName>
    </alternativeName>
</protein>